<reference key="1">
    <citation type="submission" date="2004-12" db="EMBL/GenBank/DDBJ databases">
        <title>The genome sequence of Borrelia hermsii and Borrelia turicatae: comparative analysis of two agents of endemic N. America relapsing fever.</title>
        <authorList>
            <person name="Porcella S.F."/>
            <person name="Raffel S.J."/>
            <person name="Schrumpf M.E."/>
            <person name="Montgomery B."/>
            <person name="Smith T."/>
            <person name="Schwan T.G."/>
        </authorList>
    </citation>
    <scope>NUCLEOTIDE SEQUENCE [LARGE SCALE GENOMIC DNA]</scope>
    <source>
        <strain>HS1 / DAH</strain>
    </source>
</reference>
<protein>
    <recommendedName>
        <fullName evidence="1">Translation initiation factor IF-3</fullName>
    </recommendedName>
</protein>
<evidence type="ECO:0000255" key="1">
    <source>
        <dbReference type="HAMAP-Rule" id="MF_00080"/>
    </source>
</evidence>
<evidence type="ECO:0000256" key="2">
    <source>
        <dbReference type="SAM" id="MobiDB-lite"/>
    </source>
</evidence>
<accession>B2RZQ1</accession>
<feature type="chain" id="PRO_1000092772" description="Translation initiation factor IF-3">
    <location>
        <begin position="1"/>
        <end position="186"/>
    </location>
</feature>
<feature type="region of interest" description="Disordered" evidence="2">
    <location>
        <begin position="1"/>
        <end position="20"/>
    </location>
</feature>
<organism>
    <name type="scientific">Borrelia hermsii (strain HS1 / DAH)</name>
    <dbReference type="NCBI Taxonomy" id="314723"/>
    <lineage>
        <taxon>Bacteria</taxon>
        <taxon>Pseudomonadati</taxon>
        <taxon>Spirochaetota</taxon>
        <taxon>Spirochaetia</taxon>
        <taxon>Spirochaetales</taxon>
        <taxon>Borreliaceae</taxon>
        <taxon>Borrelia</taxon>
    </lineage>
</organism>
<name>IF3_BORHD</name>
<sequence>MINRSAGKDRDRSRSGDKELRINHKIKAREVRVIFDDGTQSVLPIEDAMRCARDAELDLVEVSPNVLPPVCKIIDYGKYKFHQGKRQKEQRKNQKIIKLKEVRMQPKIDTHDLDFKYRNILGFLKEGNKVKVTIRFRGRELAHTHLGYGILEGILERIGDANYILESPAKMEGKTMFLVIAPKSKK</sequence>
<proteinExistence type="inferred from homology"/>
<dbReference type="EMBL" id="CP000048">
    <property type="protein sequence ID" value="AAX16707.1"/>
    <property type="molecule type" value="Genomic_DNA"/>
</dbReference>
<dbReference type="RefSeq" id="WP_012421964.1">
    <property type="nucleotide sequence ID" value="NZ_CP073136.1"/>
</dbReference>
<dbReference type="SMR" id="B2RZQ1"/>
<dbReference type="GeneID" id="71842997"/>
<dbReference type="KEGG" id="bhr:BH0190"/>
<dbReference type="HOGENOM" id="CLU_054919_3_2_12"/>
<dbReference type="Proteomes" id="UP000008834">
    <property type="component" value="Chromosome"/>
</dbReference>
<dbReference type="GO" id="GO:0005829">
    <property type="term" value="C:cytosol"/>
    <property type="evidence" value="ECO:0007669"/>
    <property type="project" value="TreeGrafter"/>
</dbReference>
<dbReference type="GO" id="GO:0016020">
    <property type="term" value="C:membrane"/>
    <property type="evidence" value="ECO:0007669"/>
    <property type="project" value="TreeGrafter"/>
</dbReference>
<dbReference type="GO" id="GO:0043022">
    <property type="term" value="F:ribosome binding"/>
    <property type="evidence" value="ECO:0007669"/>
    <property type="project" value="TreeGrafter"/>
</dbReference>
<dbReference type="GO" id="GO:0003743">
    <property type="term" value="F:translation initiation factor activity"/>
    <property type="evidence" value="ECO:0007669"/>
    <property type="project" value="UniProtKB-UniRule"/>
</dbReference>
<dbReference type="GO" id="GO:0032790">
    <property type="term" value="P:ribosome disassembly"/>
    <property type="evidence" value="ECO:0007669"/>
    <property type="project" value="TreeGrafter"/>
</dbReference>
<dbReference type="FunFam" id="3.30.110.10:FF:000001">
    <property type="entry name" value="Translation initiation factor IF-3"/>
    <property type="match status" value="1"/>
</dbReference>
<dbReference type="Gene3D" id="3.30.110.10">
    <property type="entry name" value="Translation initiation factor 3 (IF-3), C-terminal domain"/>
    <property type="match status" value="1"/>
</dbReference>
<dbReference type="Gene3D" id="3.10.20.80">
    <property type="entry name" value="Translation initiation factor 3 (IF-3), N-terminal domain"/>
    <property type="match status" value="1"/>
</dbReference>
<dbReference type="HAMAP" id="MF_00080">
    <property type="entry name" value="IF_3"/>
    <property type="match status" value="1"/>
</dbReference>
<dbReference type="InterPro" id="IPR036788">
    <property type="entry name" value="T_IF-3_C_sf"/>
</dbReference>
<dbReference type="InterPro" id="IPR036787">
    <property type="entry name" value="T_IF-3_N_sf"/>
</dbReference>
<dbReference type="InterPro" id="IPR019813">
    <property type="entry name" value="Translation_initiation_fac3_CS"/>
</dbReference>
<dbReference type="InterPro" id="IPR001288">
    <property type="entry name" value="Translation_initiation_fac_3"/>
</dbReference>
<dbReference type="InterPro" id="IPR019815">
    <property type="entry name" value="Translation_initiation_fac_3_C"/>
</dbReference>
<dbReference type="InterPro" id="IPR019814">
    <property type="entry name" value="Translation_initiation_fac_3_N"/>
</dbReference>
<dbReference type="NCBIfam" id="TIGR00168">
    <property type="entry name" value="infC"/>
    <property type="match status" value="1"/>
</dbReference>
<dbReference type="PANTHER" id="PTHR10938">
    <property type="entry name" value="TRANSLATION INITIATION FACTOR IF-3"/>
    <property type="match status" value="1"/>
</dbReference>
<dbReference type="PANTHER" id="PTHR10938:SF0">
    <property type="entry name" value="TRANSLATION INITIATION FACTOR IF-3, MITOCHONDRIAL"/>
    <property type="match status" value="1"/>
</dbReference>
<dbReference type="Pfam" id="PF00707">
    <property type="entry name" value="IF3_C"/>
    <property type="match status" value="1"/>
</dbReference>
<dbReference type="Pfam" id="PF05198">
    <property type="entry name" value="IF3_N"/>
    <property type="match status" value="1"/>
</dbReference>
<dbReference type="SUPFAM" id="SSF55200">
    <property type="entry name" value="Translation initiation factor IF3, C-terminal domain"/>
    <property type="match status" value="1"/>
</dbReference>
<dbReference type="SUPFAM" id="SSF54364">
    <property type="entry name" value="Translation initiation factor IF3, N-terminal domain"/>
    <property type="match status" value="1"/>
</dbReference>
<dbReference type="PROSITE" id="PS00938">
    <property type="entry name" value="IF3"/>
    <property type="match status" value="1"/>
</dbReference>
<keyword id="KW-0963">Cytoplasm</keyword>
<keyword id="KW-0396">Initiation factor</keyword>
<keyword id="KW-0648">Protein biosynthesis</keyword>
<comment type="function">
    <text evidence="1">IF-3 binds to the 30S ribosomal subunit and shifts the equilibrium between 70S ribosomes and their 50S and 30S subunits in favor of the free subunits, thus enhancing the availability of 30S subunits on which protein synthesis initiation begins.</text>
</comment>
<comment type="subunit">
    <text evidence="1">Monomer.</text>
</comment>
<comment type="subcellular location">
    <subcellularLocation>
        <location evidence="1">Cytoplasm</location>
    </subcellularLocation>
</comment>
<comment type="similarity">
    <text evidence="1">Belongs to the IF-3 family.</text>
</comment>
<gene>
    <name evidence="1" type="primary">infC</name>
    <name type="ordered locus">BH0190</name>
</gene>